<gene>
    <name evidence="1" type="primary">groEL</name>
    <name evidence="1" type="synonym">groL</name>
    <name type="ordered locus">Cphy_3289</name>
</gene>
<protein>
    <recommendedName>
        <fullName evidence="1">Chaperonin GroEL</fullName>
        <ecNumber evidence="1">5.6.1.7</ecNumber>
    </recommendedName>
    <alternativeName>
        <fullName evidence="1">60 kDa chaperonin</fullName>
    </alternativeName>
    <alternativeName>
        <fullName evidence="1">Chaperonin-60</fullName>
        <shortName evidence="1">Cpn60</shortName>
    </alternativeName>
</protein>
<proteinExistence type="inferred from homology"/>
<comment type="function">
    <text evidence="1">Together with its co-chaperonin GroES, plays an essential role in assisting protein folding. The GroEL-GroES system forms a nano-cage that allows encapsulation of the non-native substrate proteins and provides a physical environment optimized to promote and accelerate protein folding.</text>
</comment>
<comment type="catalytic activity">
    <reaction evidence="1">
        <text>ATP + H2O + a folded polypeptide = ADP + phosphate + an unfolded polypeptide.</text>
        <dbReference type="EC" id="5.6.1.7"/>
    </reaction>
</comment>
<comment type="subunit">
    <text evidence="1">Forms a cylinder of 14 subunits composed of two heptameric rings stacked back-to-back. Interacts with the co-chaperonin GroES.</text>
</comment>
<comment type="subcellular location">
    <subcellularLocation>
        <location evidence="1">Cytoplasm</location>
    </subcellularLocation>
</comment>
<comment type="similarity">
    <text evidence="1">Belongs to the chaperonin (HSP60) family.</text>
</comment>
<keyword id="KW-0067">ATP-binding</keyword>
<keyword id="KW-0143">Chaperone</keyword>
<keyword id="KW-0963">Cytoplasm</keyword>
<keyword id="KW-0413">Isomerase</keyword>
<keyword id="KW-0547">Nucleotide-binding</keyword>
<keyword id="KW-1185">Reference proteome</keyword>
<name>CH60_LACP7</name>
<sequence>MAKDIKYSADARVAMEAGVNKLANTVRVTLGPKGRNVVLDKSFGAPLITNDGVTIAKEIELEDSFENMGAQLVKEVATKTNDVAGDGTTTATVLAQAMINEGMKNLAAGANPIILRRGMKKATDCAVEAISSMSSAINGKDQIAKVAAISAGDDSVGEMVADAMDKVSKDGVITIEESKTMQTELDLVEGMQFDRGYVSAYMATDMDKMEANLDNPYILITDKKISNIQEILPVLEQIVQSGSRLLIIAEDIEGEALTTLVINKLRGTFTVVGVKAPGYGDRRKAMLQDIAILTGGTVISDELGLDLKEATLDQLGRAKSVKIQKENTIIVDGEGNKAEIEARISQIKAQIAETTSEFDKEKLQERLAKLAGGVAVIRVGAATETEMKEKKLRMEDALAATRAAVEEGIIAGGGSAYIHASKEVAKLAAKLEGDERTGAQIILKALEAPLSCIAQNAGLEGAVIVNKVREKKTGVGFNALTEKYVDMVEDGILDPSKVTRSALQNATSVASTFLTTEAAVASIKEPAPAMPAGGPGGMGMM</sequence>
<dbReference type="EC" id="5.6.1.7" evidence="1"/>
<dbReference type="EMBL" id="CP000885">
    <property type="protein sequence ID" value="ABX43643.1"/>
    <property type="molecule type" value="Genomic_DNA"/>
</dbReference>
<dbReference type="RefSeq" id="WP_012201292.1">
    <property type="nucleotide sequence ID" value="NC_010001.1"/>
</dbReference>
<dbReference type="SMR" id="A9KSJ1"/>
<dbReference type="STRING" id="357809.Cphy_3289"/>
<dbReference type="KEGG" id="cpy:Cphy_3289"/>
<dbReference type="eggNOG" id="COG0459">
    <property type="taxonomic scope" value="Bacteria"/>
</dbReference>
<dbReference type="HOGENOM" id="CLU_016503_3_0_9"/>
<dbReference type="OrthoDB" id="9766614at2"/>
<dbReference type="Proteomes" id="UP000000370">
    <property type="component" value="Chromosome"/>
</dbReference>
<dbReference type="GO" id="GO:0005737">
    <property type="term" value="C:cytoplasm"/>
    <property type="evidence" value="ECO:0007669"/>
    <property type="project" value="UniProtKB-SubCell"/>
</dbReference>
<dbReference type="GO" id="GO:0005524">
    <property type="term" value="F:ATP binding"/>
    <property type="evidence" value="ECO:0007669"/>
    <property type="project" value="UniProtKB-UniRule"/>
</dbReference>
<dbReference type="GO" id="GO:0140662">
    <property type="term" value="F:ATP-dependent protein folding chaperone"/>
    <property type="evidence" value="ECO:0007669"/>
    <property type="project" value="InterPro"/>
</dbReference>
<dbReference type="GO" id="GO:0016853">
    <property type="term" value="F:isomerase activity"/>
    <property type="evidence" value="ECO:0007669"/>
    <property type="project" value="UniProtKB-KW"/>
</dbReference>
<dbReference type="GO" id="GO:0051082">
    <property type="term" value="F:unfolded protein binding"/>
    <property type="evidence" value="ECO:0007669"/>
    <property type="project" value="UniProtKB-UniRule"/>
</dbReference>
<dbReference type="GO" id="GO:0042026">
    <property type="term" value="P:protein refolding"/>
    <property type="evidence" value="ECO:0007669"/>
    <property type="project" value="UniProtKB-UniRule"/>
</dbReference>
<dbReference type="CDD" id="cd03344">
    <property type="entry name" value="GroEL"/>
    <property type="match status" value="1"/>
</dbReference>
<dbReference type="FunFam" id="3.50.7.10:FF:000001">
    <property type="entry name" value="60 kDa chaperonin"/>
    <property type="match status" value="1"/>
</dbReference>
<dbReference type="Gene3D" id="3.50.7.10">
    <property type="entry name" value="GroEL"/>
    <property type="match status" value="1"/>
</dbReference>
<dbReference type="Gene3D" id="1.10.560.10">
    <property type="entry name" value="GroEL-like equatorial domain"/>
    <property type="match status" value="1"/>
</dbReference>
<dbReference type="Gene3D" id="3.30.260.10">
    <property type="entry name" value="TCP-1-like chaperonin intermediate domain"/>
    <property type="match status" value="1"/>
</dbReference>
<dbReference type="HAMAP" id="MF_00600">
    <property type="entry name" value="CH60"/>
    <property type="match status" value="1"/>
</dbReference>
<dbReference type="InterPro" id="IPR018370">
    <property type="entry name" value="Chaperonin_Cpn60_CS"/>
</dbReference>
<dbReference type="InterPro" id="IPR001844">
    <property type="entry name" value="Cpn60/GroEL"/>
</dbReference>
<dbReference type="InterPro" id="IPR002423">
    <property type="entry name" value="Cpn60/GroEL/TCP-1"/>
</dbReference>
<dbReference type="InterPro" id="IPR027409">
    <property type="entry name" value="GroEL-like_apical_dom_sf"/>
</dbReference>
<dbReference type="InterPro" id="IPR027413">
    <property type="entry name" value="GROEL-like_equatorial_sf"/>
</dbReference>
<dbReference type="InterPro" id="IPR027410">
    <property type="entry name" value="TCP-1-like_intermed_sf"/>
</dbReference>
<dbReference type="NCBIfam" id="TIGR02348">
    <property type="entry name" value="GroEL"/>
    <property type="match status" value="1"/>
</dbReference>
<dbReference type="NCBIfam" id="NF000592">
    <property type="entry name" value="PRK00013.1"/>
    <property type="match status" value="1"/>
</dbReference>
<dbReference type="NCBIfam" id="NF009487">
    <property type="entry name" value="PRK12849.1"/>
    <property type="match status" value="1"/>
</dbReference>
<dbReference type="NCBIfam" id="NF009488">
    <property type="entry name" value="PRK12850.1"/>
    <property type="match status" value="1"/>
</dbReference>
<dbReference type="NCBIfam" id="NF009489">
    <property type="entry name" value="PRK12851.1"/>
    <property type="match status" value="1"/>
</dbReference>
<dbReference type="PANTHER" id="PTHR45633">
    <property type="entry name" value="60 KDA HEAT SHOCK PROTEIN, MITOCHONDRIAL"/>
    <property type="match status" value="1"/>
</dbReference>
<dbReference type="Pfam" id="PF00118">
    <property type="entry name" value="Cpn60_TCP1"/>
    <property type="match status" value="1"/>
</dbReference>
<dbReference type="PRINTS" id="PR00298">
    <property type="entry name" value="CHAPERONIN60"/>
</dbReference>
<dbReference type="SUPFAM" id="SSF52029">
    <property type="entry name" value="GroEL apical domain-like"/>
    <property type="match status" value="1"/>
</dbReference>
<dbReference type="SUPFAM" id="SSF48592">
    <property type="entry name" value="GroEL equatorial domain-like"/>
    <property type="match status" value="1"/>
</dbReference>
<dbReference type="SUPFAM" id="SSF54849">
    <property type="entry name" value="GroEL-intermediate domain like"/>
    <property type="match status" value="1"/>
</dbReference>
<dbReference type="PROSITE" id="PS00296">
    <property type="entry name" value="CHAPERONINS_CPN60"/>
    <property type="match status" value="1"/>
</dbReference>
<organism>
    <name type="scientific">Lachnoclostridium phytofermentans (strain ATCC 700394 / DSM 18823 / ISDg)</name>
    <name type="common">Clostridium phytofermentans</name>
    <dbReference type="NCBI Taxonomy" id="357809"/>
    <lineage>
        <taxon>Bacteria</taxon>
        <taxon>Bacillati</taxon>
        <taxon>Bacillota</taxon>
        <taxon>Clostridia</taxon>
        <taxon>Lachnospirales</taxon>
        <taxon>Lachnospiraceae</taxon>
    </lineage>
</organism>
<accession>A9KSJ1</accession>
<reference key="1">
    <citation type="submission" date="2007-11" db="EMBL/GenBank/DDBJ databases">
        <title>Complete genome sequence of Clostridium phytofermentans ISDg.</title>
        <authorList>
            <person name="Leschine S.B."/>
            <person name="Warnick T.A."/>
            <person name="Blanchard J.L."/>
            <person name="Schnell D.J."/>
            <person name="Petit E.L."/>
            <person name="LaTouf W.G."/>
            <person name="Copeland A."/>
            <person name="Lucas S."/>
            <person name="Lapidus A."/>
            <person name="Barry K."/>
            <person name="Glavina del Rio T."/>
            <person name="Dalin E."/>
            <person name="Tice H."/>
            <person name="Pitluck S."/>
            <person name="Kiss H."/>
            <person name="Brettin T."/>
            <person name="Bruce D."/>
            <person name="Detter J.C."/>
            <person name="Han C."/>
            <person name="Kuske C."/>
            <person name="Schmutz J."/>
            <person name="Larimer F."/>
            <person name="Land M."/>
            <person name="Hauser L."/>
            <person name="Kyrpides N."/>
            <person name="Kim E.A."/>
            <person name="Richardson P."/>
        </authorList>
    </citation>
    <scope>NUCLEOTIDE SEQUENCE [LARGE SCALE GENOMIC DNA]</scope>
    <source>
        <strain>ATCC 700394 / DSM 18823 / ISDg</strain>
    </source>
</reference>
<evidence type="ECO:0000255" key="1">
    <source>
        <dbReference type="HAMAP-Rule" id="MF_00600"/>
    </source>
</evidence>
<feature type="chain" id="PRO_1000082469" description="Chaperonin GroEL">
    <location>
        <begin position="1"/>
        <end position="541"/>
    </location>
</feature>
<feature type="binding site" evidence="1">
    <location>
        <begin position="29"/>
        <end position="32"/>
    </location>
    <ligand>
        <name>ATP</name>
        <dbReference type="ChEBI" id="CHEBI:30616"/>
    </ligand>
</feature>
<feature type="binding site" evidence="1">
    <location>
        <begin position="86"/>
        <end position="90"/>
    </location>
    <ligand>
        <name>ATP</name>
        <dbReference type="ChEBI" id="CHEBI:30616"/>
    </ligand>
</feature>
<feature type="binding site" evidence="1">
    <location>
        <position position="413"/>
    </location>
    <ligand>
        <name>ATP</name>
        <dbReference type="ChEBI" id="CHEBI:30616"/>
    </ligand>
</feature>
<feature type="binding site" evidence="1">
    <location>
        <begin position="478"/>
        <end position="480"/>
    </location>
    <ligand>
        <name>ATP</name>
        <dbReference type="ChEBI" id="CHEBI:30616"/>
    </ligand>
</feature>
<feature type="binding site" evidence="1">
    <location>
        <position position="494"/>
    </location>
    <ligand>
        <name>ATP</name>
        <dbReference type="ChEBI" id="CHEBI:30616"/>
    </ligand>
</feature>